<dbReference type="EC" id="3.5.4.2" evidence="1"/>
<dbReference type="EMBL" id="CP000038">
    <property type="protein sequence ID" value="AAZ90169.1"/>
    <property type="molecule type" value="Genomic_DNA"/>
</dbReference>
<dbReference type="SMR" id="Q3YWE3"/>
<dbReference type="KEGG" id="ssn:SSON_3619"/>
<dbReference type="HOGENOM" id="CLU_027935_0_0_6"/>
<dbReference type="Proteomes" id="UP000002529">
    <property type="component" value="Chromosome"/>
</dbReference>
<dbReference type="GO" id="GO:0000034">
    <property type="term" value="F:adenine deaminase activity"/>
    <property type="evidence" value="ECO:0007669"/>
    <property type="project" value="UniProtKB-UniRule"/>
</dbReference>
<dbReference type="GO" id="GO:0006146">
    <property type="term" value="P:adenine catabolic process"/>
    <property type="evidence" value="ECO:0007669"/>
    <property type="project" value="InterPro"/>
</dbReference>
<dbReference type="CDD" id="cd01295">
    <property type="entry name" value="AdeC"/>
    <property type="match status" value="1"/>
</dbReference>
<dbReference type="FunFam" id="3.20.20.140:FF:000016">
    <property type="entry name" value="Adenine deaminase"/>
    <property type="match status" value="1"/>
</dbReference>
<dbReference type="Gene3D" id="3.20.20.140">
    <property type="entry name" value="Metal-dependent hydrolases"/>
    <property type="match status" value="1"/>
</dbReference>
<dbReference type="Gene3D" id="2.30.40.10">
    <property type="entry name" value="Urease, subunit C, domain 1"/>
    <property type="match status" value="1"/>
</dbReference>
<dbReference type="HAMAP" id="MF_01518">
    <property type="entry name" value="Adenine_deamin"/>
    <property type="match status" value="1"/>
</dbReference>
<dbReference type="InterPro" id="IPR006679">
    <property type="entry name" value="Adenine_deam"/>
</dbReference>
<dbReference type="InterPro" id="IPR026912">
    <property type="entry name" value="Adenine_deam_C"/>
</dbReference>
<dbReference type="InterPro" id="IPR006680">
    <property type="entry name" value="Amidohydro-rel"/>
</dbReference>
<dbReference type="InterPro" id="IPR011059">
    <property type="entry name" value="Metal-dep_hydrolase_composite"/>
</dbReference>
<dbReference type="InterPro" id="IPR032466">
    <property type="entry name" value="Metal_Hydrolase"/>
</dbReference>
<dbReference type="NCBIfam" id="TIGR01178">
    <property type="entry name" value="ade"/>
    <property type="match status" value="1"/>
</dbReference>
<dbReference type="NCBIfam" id="NF007457">
    <property type="entry name" value="PRK10027.1"/>
    <property type="match status" value="1"/>
</dbReference>
<dbReference type="PANTHER" id="PTHR11113:SF2">
    <property type="entry name" value="ADENINE DEAMINASE"/>
    <property type="match status" value="1"/>
</dbReference>
<dbReference type="PANTHER" id="PTHR11113">
    <property type="entry name" value="N-ACETYLGLUCOSAMINE-6-PHOSPHATE DEACETYLASE"/>
    <property type="match status" value="1"/>
</dbReference>
<dbReference type="Pfam" id="PF13382">
    <property type="entry name" value="Adenine_deam_C"/>
    <property type="match status" value="1"/>
</dbReference>
<dbReference type="Pfam" id="PF01979">
    <property type="entry name" value="Amidohydro_1"/>
    <property type="match status" value="1"/>
</dbReference>
<dbReference type="SUPFAM" id="SSF51338">
    <property type="entry name" value="Composite domain of metallo-dependent hydrolases"/>
    <property type="match status" value="1"/>
</dbReference>
<dbReference type="SUPFAM" id="SSF51556">
    <property type="entry name" value="Metallo-dependent hydrolases"/>
    <property type="match status" value="1"/>
</dbReference>
<reference key="1">
    <citation type="journal article" date="2005" name="Nucleic Acids Res.">
        <title>Genome dynamics and diversity of Shigella species, the etiologic agents of bacillary dysentery.</title>
        <authorList>
            <person name="Yang F."/>
            <person name="Yang J."/>
            <person name="Zhang X."/>
            <person name="Chen L."/>
            <person name="Jiang Y."/>
            <person name="Yan Y."/>
            <person name="Tang X."/>
            <person name="Wang J."/>
            <person name="Xiong Z."/>
            <person name="Dong J."/>
            <person name="Xue Y."/>
            <person name="Zhu Y."/>
            <person name="Xu X."/>
            <person name="Sun L."/>
            <person name="Chen S."/>
            <person name="Nie H."/>
            <person name="Peng J."/>
            <person name="Xu J."/>
            <person name="Wang Y."/>
            <person name="Yuan Z."/>
            <person name="Wen Y."/>
            <person name="Yao Z."/>
            <person name="Shen Y."/>
            <person name="Qiang B."/>
            <person name="Hou Y."/>
            <person name="Yu J."/>
            <person name="Jin Q."/>
        </authorList>
    </citation>
    <scope>NUCLEOTIDE SEQUENCE [LARGE SCALE GENOMIC DNA]</scope>
    <source>
        <strain>Ss046</strain>
    </source>
</reference>
<gene>
    <name evidence="1" type="primary">ade</name>
    <name type="ordered locus">SSON_3619</name>
</gene>
<evidence type="ECO:0000255" key="1">
    <source>
        <dbReference type="HAMAP-Rule" id="MF_01518"/>
    </source>
</evidence>
<name>ADEC_SHISS</name>
<comment type="catalytic activity">
    <reaction evidence="1">
        <text>adenine + H2O + H(+) = hypoxanthine + NH4(+)</text>
        <dbReference type="Rhea" id="RHEA:23688"/>
        <dbReference type="ChEBI" id="CHEBI:15377"/>
        <dbReference type="ChEBI" id="CHEBI:15378"/>
        <dbReference type="ChEBI" id="CHEBI:16708"/>
        <dbReference type="ChEBI" id="CHEBI:17368"/>
        <dbReference type="ChEBI" id="CHEBI:28938"/>
        <dbReference type="EC" id="3.5.4.2"/>
    </reaction>
</comment>
<comment type="cofactor">
    <cofactor evidence="1">
        <name>Mn(2+)</name>
        <dbReference type="ChEBI" id="CHEBI:29035"/>
    </cofactor>
</comment>
<comment type="subunit">
    <text evidence="1">Homodimer.</text>
</comment>
<comment type="similarity">
    <text evidence="1">Belongs to the metallo-dependent hydrolases superfamily. Adenine deaminase family.</text>
</comment>
<feature type="chain" id="PRO_0000296734" description="Adenine deaminase">
    <location>
        <begin position="1"/>
        <end position="588"/>
    </location>
</feature>
<keyword id="KW-0378">Hydrolase</keyword>
<keyword id="KW-0464">Manganese</keyword>
<keyword id="KW-1185">Reference proteome</keyword>
<protein>
    <recommendedName>
        <fullName evidence="1">Adenine deaminase</fullName>
        <shortName evidence="1">Adenase</shortName>
        <shortName evidence="1">Adenine aminase</shortName>
        <ecNumber evidence="1">3.5.4.2</ecNumber>
    </recommendedName>
</protein>
<sequence>MNNSINHKFHHISRAEYQELLAVSRGDAVADYIIDNVSILDLINGGEISGPIVIKGRYIAGVGAEYADAPALQRIDARGATAVPGFIDAHLHIESSMMTPVTFETATLPRGLTTVICDPHEIVNVMGEAGFAWFARCAEQARQNQYLQVSSCVPALEGCDVNGASFTLEQMLAWRDHPQVTGLAEMMDYPGVISGQNALLDKLDAFRHLTLDGHCPGLGGKELNAYITAGIENCHESYQLEEGRRKLQLGMSLMIREGSAARNLNALAPLINEFNSPQCMLCTDDRNPWEIAHEGHIDALIRRLIEQHNVPLHVAYRVASWSTARHFGLNHLGLLAPGKQADIVLLSDARKVTVQQVLVKGEPIDAQTLQAEESARLAQSAPPYGNTIARQPVSASDFALQFTPGKRYRVIDVIHNELITHSHSSVYSENGFDRDDVCFIAVLERYGQRLAPACGLLGGFGLNEGALAATVSHDSHNIVVIGRSAEEMALAVNQVIQDGGGLCVVRNGQVQSHLPLPIAGLMSTDTAQSLAEQIDALKAAARECGPLPDEPFIQMAFLSLPVIPALKLTSQGLFDVEKFAFTTLEVTE</sequence>
<accession>Q3YWE3</accession>
<proteinExistence type="inferred from homology"/>
<organism>
    <name type="scientific">Shigella sonnei (strain Ss046)</name>
    <dbReference type="NCBI Taxonomy" id="300269"/>
    <lineage>
        <taxon>Bacteria</taxon>
        <taxon>Pseudomonadati</taxon>
        <taxon>Pseudomonadota</taxon>
        <taxon>Gammaproteobacteria</taxon>
        <taxon>Enterobacterales</taxon>
        <taxon>Enterobacteriaceae</taxon>
        <taxon>Shigella</taxon>
    </lineage>
</organism>